<organism>
    <name type="scientific">Dichelobacter nodosus</name>
    <name type="common">Bacteroides nodosus</name>
    <dbReference type="NCBI Taxonomy" id="870"/>
    <lineage>
        <taxon>Bacteria</taxon>
        <taxon>Pseudomonadati</taxon>
        <taxon>Pseudomonadota</taxon>
        <taxon>Gammaproteobacteria</taxon>
        <taxon>Cardiobacteriales</taxon>
        <taxon>Cardiobacteriaceae</taxon>
        <taxon>Dichelobacter</taxon>
    </lineage>
</organism>
<evidence type="ECO:0000250" key="1">
    <source>
        <dbReference type="UniProtKB" id="A5EWR9"/>
    </source>
</evidence>
<evidence type="ECO:0000250" key="2">
    <source>
        <dbReference type="UniProtKB" id="P02975"/>
    </source>
</evidence>
<evidence type="ECO:0000255" key="3"/>
<evidence type="ECO:0000255" key="4">
    <source>
        <dbReference type="PROSITE-ProRule" id="PRU01070"/>
    </source>
</evidence>
<evidence type="ECO:0000305" key="5"/>
<dbReference type="EMBL" id="M37473">
    <property type="protein sequence ID" value="AAA23338.1"/>
    <property type="molecule type" value="Genomic_DNA"/>
</dbReference>
<dbReference type="PIR" id="PS0420">
    <property type="entry name" value="PS0420"/>
</dbReference>
<dbReference type="SMR" id="P27688"/>
<dbReference type="GO" id="GO:0016020">
    <property type="term" value="C:membrane"/>
    <property type="evidence" value="ECO:0007669"/>
    <property type="project" value="UniProtKB-SubCell"/>
</dbReference>
<dbReference type="GO" id="GO:0009289">
    <property type="term" value="C:pilus"/>
    <property type="evidence" value="ECO:0007669"/>
    <property type="project" value="UniProtKB-SubCell"/>
</dbReference>
<dbReference type="GO" id="GO:0007155">
    <property type="term" value="P:cell adhesion"/>
    <property type="evidence" value="ECO:0007669"/>
    <property type="project" value="InterPro"/>
</dbReference>
<dbReference type="Gene3D" id="3.30.700.10">
    <property type="entry name" value="Glycoprotein, Type 4 Pilin"/>
    <property type="match status" value="1"/>
</dbReference>
<dbReference type="InterPro" id="IPR012902">
    <property type="entry name" value="N_methyl_site"/>
</dbReference>
<dbReference type="InterPro" id="IPR001082">
    <property type="entry name" value="Pilin"/>
</dbReference>
<dbReference type="InterPro" id="IPR045584">
    <property type="entry name" value="Pilin-like"/>
</dbReference>
<dbReference type="NCBIfam" id="TIGR02532">
    <property type="entry name" value="IV_pilin_GFxxxE"/>
    <property type="match status" value="1"/>
</dbReference>
<dbReference type="Pfam" id="PF07963">
    <property type="entry name" value="N_methyl"/>
    <property type="match status" value="1"/>
</dbReference>
<dbReference type="Pfam" id="PF00114">
    <property type="entry name" value="Pilin"/>
    <property type="match status" value="1"/>
</dbReference>
<dbReference type="SUPFAM" id="SSF54523">
    <property type="entry name" value="Pili subunits"/>
    <property type="match status" value="1"/>
</dbReference>
<dbReference type="PROSITE" id="PS00409">
    <property type="entry name" value="PROKAR_NTER_METHYL"/>
    <property type="match status" value="1"/>
</dbReference>
<keyword id="KW-1015">Disulfide bond</keyword>
<keyword id="KW-0281">Fimbrium</keyword>
<keyword id="KW-0472">Membrane</keyword>
<keyword id="KW-0488">Methylation</keyword>
<keyword id="KW-0812">Transmembrane</keyword>
<keyword id="KW-1133">Transmembrane helix</keyword>
<accession>P27688</accession>
<feature type="propeptide" id="PRO_0000024115" description="Leader sequence" evidence="4">
    <location>
        <begin position="1"/>
        <end position="7"/>
    </location>
</feature>
<feature type="chain" id="PRO_0000024116" description="Type IV major fimbrial protein FimA">
    <location>
        <begin position="8"/>
        <end position="160"/>
    </location>
</feature>
<feature type="transmembrane region" description="Helical" evidence="3">
    <location>
        <begin position="8"/>
        <end position="28"/>
    </location>
</feature>
<feature type="modified residue" description="N-methylphenylalanine" evidence="4">
    <location>
        <position position="8"/>
    </location>
</feature>
<feature type="disulfide bond" evidence="2">
    <location>
        <begin position="63"/>
        <end position="105"/>
    </location>
</feature>
<gene>
    <name type="primary">fimA</name>
</gene>
<reference key="1">
    <citation type="journal article" date="1991" name="Gene">
        <title>Sequence of fimbrial subunit-encoding genes from virulent and benign isolates of Dichelobacter (Bacteroides) nodosus.</title>
        <authorList>
            <person name="Billington S.J."/>
            <person name="Rood J.I."/>
        </authorList>
    </citation>
    <scope>NUCLEOTIDE SEQUENCE [GENOMIC DNA]</scope>
    <source>
        <strain>Serogroup B1 isolate AC20</strain>
    </source>
</reference>
<comment type="function">
    <text evidence="1">Major component of the type IV fimbriae that plays an essential role in twitching motility, natural transformation, and protease secretion.</text>
</comment>
<comment type="subunit">
    <text>The pili are polar flexible filaments of about 5.4 nanometers diameter and 2.5 micrometers average length; they consist of only a single polypeptide chain arranged in a helical configuration of five subunits per turn in the assembled pilus.</text>
</comment>
<comment type="subcellular location">
    <subcellularLocation>
        <location evidence="1">Fimbrium</location>
    </subcellularLocation>
    <subcellularLocation>
        <location evidence="3">Membrane</location>
        <topology evidence="3">Single-pass membrane protein</topology>
    </subcellularLocation>
</comment>
<comment type="similarity">
    <text evidence="5">Belongs to the N-Me-Phe pilin family.</text>
</comment>
<proteinExistence type="inferred from homology"/>
<protein>
    <recommendedName>
        <fullName>Type IV major fimbrial protein FimA</fullName>
    </recommendedName>
    <alternativeName>
        <fullName>Pilin</fullName>
    </alternativeName>
    <alternativeName>
        <fullName>Serogroup B1/AC20</fullName>
    </alternativeName>
</protein>
<name>FMA0_DICNO</name>
<sequence length="160" mass="16693">MKSLQKGFTLIELMIVVAIIGILAAFAIPAYNDYIARSQAAEGVSLADGLKVRIAENLQDGECKGPDADPQSGVVGNEDIGKYALAKIEGDYDASKTDAGAPNGCKVEITYGQGTAEGKISKLITGKKLVLDQLVNGSFIAGDGTDLADKFMPNAVKAKK</sequence>